<name>SC6A8_TORMA</name>
<feature type="chain" id="PRO_0000214778" description="Creatine transporter">
    <location>
        <begin position="1"/>
        <end position="611"/>
    </location>
</feature>
<feature type="transmembrane region" description="Helical" evidence="2">
    <location>
        <begin position="45"/>
        <end position="65"/>
    </location>
</feature>
<feature type="topological domain" description="Extracellular" evidence="2">
    <location>
        <begin position="66"/>
        <end position="71"/>
    </location>
</feature>
<feature type="transmembrane region" description="Helical" evidence="2">
    <location>
        <begin position="72"/>
        <end position="92"/>
    </location>
</feature>
<feature type="topological domain" description="Cytoplasmic" evidence="2">
    <location>
        <begin position="93"/>
        <end position="122"/>
    </location>
</feature>
<feature type="transmembrane region" description="Helical" evidence="2">
    <location>
        <begin position="123"/>
        <end position="143"/>
    </location>
</feature>
<feature type="topological domain" description="Extracellular" evidence="2">
    <location>
        <begin position="144"/>
        <end position="207"/>
    </location>
</feature>
<feature type="transmembrane region" description="Helical" evidence="2">
    <location>
        <begin position="208"/>
        <end position="228"/>
    </location>
</feature>
<feature type="topological domain" description="Cytoplasmic" evidence="2">
    <location>
        <begin position="229"/>
        <end position="246"/>
    </location>
</feature>
<feature type="transmembrane region" description="Helical" evidence="2">
    <location>
        <begin position="247"/>
        <end position="267"/>
    </location>
</feature>
<feature type="topological domain" description="Extracellular" evidence="2">
    <location>
        <begin position="268"/>
        <end position="281"/>
    </location>
</feature>
<feature type="transmembrane region" description="Helical" evidence="2">
    <location>
        <begin position="282"/>
        <end position="302"/>
    </location>
</feature>
<feature type="topological domain" description="Cytoplasmic" evidence="2">
    <location>
        <begin position="303"/>
        <end position="318"/>
    </location>
</feature>
<feature type="transmembrane region" description="Helical" evidence="2">
    <location>
        <begin position="319"/>
        <end position="339"/>
    </location>
</feature>
<feature type="topological domain" description="Extracellular" evidence="2">
    <location>
        <begin position="340"/>
        <end position="371"/>
    </location>
</feature>
<feature type="transmembrane region" description="Helical" evidence="2">
    <location>
        <begin position="372"/>
        <end position="392"/>
    </location>
</feature>
<feature type="topological domain" description="Cytoplasmic" evidence="2">
    <location>
        <begin position="393"/>
        <end position="421"/>
    </location>
</feature>
<feature type="transmembrane region" description="Helical" evidence="2">
    <location>
        <begin position="422"/>
        <end position="442"/>
    </location>
</feature>
<feature type="topological domain" description="Extracellular" evidence="2">
    <location>
        <begin position="443"/>
        <end position="456"/>
    </location>
</feature>
<feature type="transmembrane region" description="Helical" evidence="2">
    <location>
        <begin position="457"/>
        <end position="477"/>
    </location>
</feature>
<feature type="topological domain" description="Cytoplasmic" evidence="2">
    <location>
        <begin position="478"/>
        <end position="497"/>
    </location>
</feature>
<feature type="transmembrane region" description="Helical" evidence="2">
    <location>
        <begin position="498"/>
        <end position="518"/>
    </location>
</feature>
<feature type="topological domain" description="Extracellular" evidence="2">
    <location>
        <begin position="519"/>
        <end position="537"/>
    </location>
</feature>
<feature type="transmembrane region" description="Helical" evidence="2">
    <location>
        <begin position="538"/>
        <end position="558"/>
    </location>
</feature>
<feature type="topological domain" description="Cytoplasmic" evidence="2">
    <location>
        <begin position="559"/>
        <end position="611"/>
    </location>
</feature>
<feature type="glycosylation site" description="N-linked (GlcNAc...) asparagine" evidence="2">
    <location>
        <position position="157"/>
    </location>
</feature>
<feature type="glycosylation site" description="N-linked (GlcNAc...) asparagine" evidence="2">
    <location>
        <position position="171"/>
    </location>
</feature>
<feature type="glycosylation site" description="N-linked (GlcNAc...) asparagine" evidence="2">
    <location>
        <position position="525"/>
    </location>
</feature>
<keyword id="KW-0325">Glycoprotein</keyword>
<keyword id="KW-0406">Ion transport</keyword>
<keyword id="KW-0472">Membrane</keyword>
<keyword id="KW-0915">Sodium</keyword>
<keyword id="KW-0739">Sodium transport</keyword>
<keyword id="KW-0769">Symport</keyword>
<keyword id="KW-0812">Transmembrane</keyword>
<keyword id="KW-1133">Transmembrane helix</keyword>
<keyword id="KW-0813">Transport</keyword>
<dbReference type="EMBL" id="X77306">
    <property type="protein sequence ID" value="CAA54512.1"/>
    <property type="molecule type" value="mRNA"/>
</dbReference>
<dbReference type="PIR" id="S46260">
    <property type="entry name" value="S46260"/>
</dbReference>
<dbReference type="SMR" id="Q91502"/>
<dbReference type="GO" id="GO:0005886">
    <property type="term" value="C:plasma membrane"/>
    <property type="evidence" value="ECO:0007669"/>
    <property type="project" value="TreeGrafter"/>
</dbReference>
<dbReference type="GO" id="GO:0005332">
    <property type="term" value="F:gamma-aminobutyric acid:sodium:chloride symporter activity"/>
    <property type="evidence" value="ECO:0007669"/>
    <property type="project" value="TreeGrafter"/>
</dbReference>
<dbReference type="CDD" id="cd11509">
    <property type="entry name" value="SLC6sbd_CT1"/>
    <property type="match status" value="1"/>
</dbReference>
<dbReference type="InterPro" id="IPR000175">
    <property type="entry name" value="Na/ntran_symport"/>
</dbReference>
<dbReference type="InterPro" id="IPR037272">
    <property type="entry name" value="SNS_sf"/>
</dbReference>
<dbReference type="PANTHER" id="PTHR11616">
    <property type="entry name" value="SODIUM/CHLORIDE DEPENDENT TRANSPORTER"/>
    <property type="match status" value="1"/>
</dbReference>
<dbReference type="PANTHER" id="PTHR11616:SF325">
    <property type="entry name" value="TRANSPORTER"/>
    <property type="match status" value="1"/>
</dbReference>
<dbReference type="Pfam" id="PF00209">
    <property type="entry name" value="SNF"/>
    <property type="match status" value="1"/>
</dbReference>
<dbReference type="PRINTS" id="PR00176">
    <property type="entry name" value="NANEUSMPORT"/>
</dbReference>
<dbReference type="SUPFAM" id="SSF161070">
    <property type="entry name" value="SNF-like"/>
    <property type="match status" value="1"/>
</dbReference>
<dbReference type="PROSITE" id="PS00610">
    <property type="entry name" value="NA_NEUROTRAN_SYMP_1"/>
    <property type="match status" value="1"/>
</dbReference>
<dbReference type="PROSITE" id="PS00754">
    <property type="entry name" value="NA_NEUROTRAN_SYMP_2"/>
    <property type="match status" value="1"/>
</dbReference>
<dbReference type="PROSITE" id="PS50267">
    <property type="entry name" value="NA_NEUROTRAN_SYMP_3"/>
    <property type="match status" value="1"/>
</dbReference>
<sequence>MPSRAVRRCPGHLCKEMRAPRRAQPPDVPAGEPGSRVTWSRQMDFIMSCVGFAVGLGNVWRFPYLCYKNGGGVFLIPYLLVAVFGGIPIFFLEISLGQFMKAGGINAWNIAPLFKGLGYASMVIVFFCNTYYILVLTWSSFYLVQSFSSPLPWASCNNTWNTAACYEAGANASTEIYPPTAPAQSSIVQFWERRVLRLSSGLGDVGEIGWELTLCLTATWMLVYFCIWKGVKTSGKVVYVTATFPYIILVILLVRGVTLHGAVQGIVYYLQPDWGKLGEAQVWIDAGTQIFFSYAIGLGTLTALGSYNQLHNDCYKDAFILSLVNSATSFFAGLVVFSILGFMAVEEGVDISVVAESGPGLAFIAYPKAVTLMPFPQVWAVLFFIMLLCLGLGSQFVGVEGFVTAILDLWPSKFSFRYLREVVVAMVICLSFLIDLSMITEGGMYIFQIFDYYSASGTTLLWTAFWECVAVAWVYGGDRYLDDLAWMLGYRPWALVKWCWSVITPLVCMGIFTFHLVNYKPLTYNKTYTYPWWGEAIGWCLALASMLCVPTTVLYSLSRGRGSLKERWRKLTTPVWASHHLAYKMAGAKINQPCEGVVSCEEKVVIFESVL</sequence>
<comment type="function">
    <text>Required for the uptake of creatine.</text>
</comment>
<comment type="subcellular location">
    <subcellularLocation>
        <location evidence="1">Membrane</location>
        <topology evidence="1">Multi-pass membrane protein</topology>
    </subcellularLocation>
</comment>
<comment type="similarity">
    <text evidence="3">Belongs to the sodium:neurotransmitter symporter (SNF) (TC 2.A.22) family.</text>
</comment>
<accession>Q91502</accession>
<proteinExistence type="evidence at transcript level"/>
<reference key="1">
    <citation type="journal article" date="1994" name="J. Mol. Biol.">
        <title>A creatine transporter cDNA from Torpedo illustrates structure/function relationships in the GABA/noradrenaline transporter family.</title>
        <authorList>
            <person name="Guimbal C."/>
            <person name="Kilimann M.W."/>
        </authorList>
    </citation>
    <scope>NUCLEOTIDE SEQUENCE [MRNA]</scope>
    <source>
        <tissue>Electric lobe</tissue>
    </source>
</reference>
<organism>
    <name type="scientific">Torpedo marmorata</name>
    <name type="common">Marbled electric ray</name>
    <dbReference type="NCBI Taxonomy" id="7788"/>
    <lineage>
        <taxon>Eukaryota</taxon>
        <taxon>Metazoa</taxon>
        <taxon>Chordata</taxon>
        <taxon>Craniata</taxon>
        <taxon>Vertebrata</taxon>
        <taxon>Chondrichthyes</taxon>
        <taxon>Elasmobranchii</taxon>
        <taxon>Batoidea</taxon>
        <taxon>Torpediniformes</taxon>
        <taxon>Torpedinidae</taxon>
        <taxon>Torpedo</taxon>
    </lineage>
</organism>
<evidence type="ECO:0000250" key="1"/>
<evidence type="ECO:0000255" key="2"/>
<evidence type="ECO:0000305" key="3"/>
<protein>
    <recommendedName>
        <fullName>Creatine transporter</fullName>
    </recommendedName>
</protein>